<accession>Q0SHY5</accession>
<comment type="catalytic activity">
    <reaction evidence="1">
        <text>1-(5-phospho-beta-D-ribosyl)-5-[(5-phospho-beta-D-ribosylamino)methylideneamino]imidazole-4-carboxamide = 5-[(5-phospho-1-deoxy-D-ribulos-1-ylimino)methylamino]-1-(5-phospho-beta-D-ribosyl)imidazole-4-carboxamide</text>
        <dbReference type="Rhea" id="RHEA:15469"/>
        <dbReference type="ChEBI" id="CHEBI:58435"/>
        <dbReference type="ChEBI" id="CHEBI:58525"/>
        <dbReference type="EC" id="5.3.1.16"/>
    </reaction>
</comment>
<comment type="pathway">
    <text evidence="1">Amino-acid biosynthesis; L-histidine biosynthesis; L-histidine from 5-phospho-alpha-D-ribose 1-diphosphate: step 4/9.</text>
</comment>
<comment type="subcellular location">
    <subcellularLocation>
        <location evidence="1">Cytoplasm</location>
    </subcellularLocation>
</comment>
<comment type="similarity">
    <text evidence="1">Belongs to the HisA/HisF family.</text>
</comment>
<name>HIS4_RHOJR</name>
<reference key="1">
    <citation type="journal article" date="2006" name="Proc. Natl. Acad. Sci. U.S.A.">
        <title>The complete genome of Rhodococcus sp. RHA1 provides insights into a catabolic powerhouse.</title>
        <authorList>
            <person name="McLeod M.P."/>
            <person name="Warren R.L."/>
            <person name="Hsiao W.W.L."/>
            <person name="Araki N."/>
            <person name="Myhre M."/>
            <person name="Fernandes C."/>
            <person name="Miyazawa D."/>
            <person name="Wong W."/>
            <person name="Lillquist A.L."/>
            <person name="Wang D."/>
            <person name="Dosanjh M."/>
            <person name="Hara H."/>
            <person name="Petrescu A."/>
            <person name="Morin R.D."/>
            <person name="Yang G."/>
            <person name="Stott J.M."/>
            <person name="Schein J.E."/>
            <person name="Shin H."/>
            <person name="Smailus D."/>
            <person name="Siddiqui A.S."/>
            <person name="Marra M.A."/>
            <person name="Jones S.J.M."/>
            <person name="Holt R."/>
            <person name="Brinkman F.S.L."/>
            <person name="Miyauchi K."/>
            <person name="Fukuda M."/>
            <person name="Davies J.E."/>
            <person name="Mohn W.W."/>
            <person name="Eltis L.D."/>
        </authorList>
    </citation>
    <scope>NUCLEOTIDE SEQUENCE [LARGE SCALE GENOMIC DNA]</scope>
    <source>
        <strain>RHA1</strain>
    </source>
</reference>
<keyword id="KW-0028">Amino-acid biosynthesis</keyword>
<keyword id="KW-0963">Cytoplasm</keyword>
<keyword id="KW-0368">Histidine biosynthesis</keyword>
<keyword id="KW-0413">Isomerase</keyword>
<gene>
    <name evidence="1" type="primary">hisA</name>
    <name type="ordered locus">RHA1_ro01024</name>
</gene>
<protein>
    <recommendedName>
        <fullName evidence="1">1-(5-phosphoribosyl)-5-[(5-phosphoribosylamino)methylideneamino] imidazole-4-carboxamide isomerase</fullName>
        <ecNumber evidence="1">5.3.1.16</ecNumber>
    </recommendedName>
    <alternativeName>
        <fullName evidence="1">Phosphoribosylformimino-5-aminoimidazole carboxamide ribotide isomerase</fullName>
    </alternativeName>
</protein>
<proteinExistence type="inferred from homology"/>
<feature type="chain" id="PRO_0000290522" description="1-(5-phosphoribosyl)-5-[(5-phosphoribosylamino)methylideneamino] imidazole-4-carboxamide isomerase">
    <location>
        <begin position="1"/>
        <end position="244"/>
    </location>
</feature>
<feature type="active site" description="Proton acceptor" evidence="1">
    <location>
        <position position="10"/>
    </location>
</feature>
<feature type="active site" description="Proton donor" evidence="1">
    <location>
        <position position="129"/>
    </location>
</feature>
<sequence>MSLVLLPAVDVVNGEAVRLVQGEAGSETGYGSPRDAALAWQNDGAEWVHIVDLDAAFGRGSNRELLADVVGELDVQVELSGGIRDDASLEAALATGCGRVNLGTAAIENPEWCARAIAKYGEKIAVGLDVRLVDGEYQLRGRGWVTEGGNLWETLARLDKDGCSRYVVTDVSKDGTLTGPNLELLAQVCAATDAPVVASGGVSTIDDLRAIAGLVDQGVEGSIVGKALYAGRFTLPEALAAVSG</sequence>
<organism>
    <name type="scientific">Rhodococcus jostii (strain RHA1)</name>
    <dbReference type="NCBI Taxonomy" id="101510"/>
    <lineage>
        <taxon>Bacteria</taxon>
        <taxon>Bacillati</taxon>
        <taxon>Actinomycetota</taxon>
        <taxon>Actinomycetes</taxon>
        <taxon>Mycobacteriales</taxon>
        <taxon>Nocardiaceae</taxon>
        <taxon>Rhodococcus</taxon>
    </lineage>
</organism>
<dbReference type="EC" id="5.3.1.16" evidence="1"/>
<dbReference type="EMBL" id="CP000431">
    <property type="protein sequence ID" value="ABG92851.1"/>
    <property type="molecule type" value="Genomic_DNA"/>
</dbReference>
<dbReference type="SMR" id="Q0SHY5"/>
<dbReference type="KEGG" id="rha:RHA1_ro01024"/>
<dbReference type="eggNOG" id="COG0106">
    <property type="taxonomic scope" value="Bacteria"/>
</dbReference>
<dbReference type="HOGENOM" id="CLU_048577_1_1_11"/>
<dbReference type="OrthoDB" id="9807749at2"/>
<dbReference type="UniPathway" id="UPA00031">
    <property type="reaction ID" value="UER00009"/>
</dbReference>
<dbReference type="Proteomes" id="UP000008710">
    <property type="component" value="Chromosome"/>
</dbReference>
<dbReference type="GO" id="GO:0005737">
    <property type="term" value="C:cytoplasm"/>
    <property type="evidence" value="ECO:0007669"/>
    <property type="project" value="UniProtKB-SubCell"/>
</dbReference>
<dbReference type="GO" id="GO:0003949">
    <property type="term" value="F:1-(5-phosphoribosyl)-5-[(5-phosphoribosylamino)methylideneamino]imidazole-4-carboxamide isomerase activity"/>
    <property type="evidence" value="ECO:0007669"/>
    <property type="project" value="UniProtKB-UniRule"/>
</dbReference>
<dbReference type="GO" id="GO:0004640">
    <property type="term" value="F:phosphoribosylanthranilate isomerase activity"/>
    <property type="evidence" value="ECO:0007669"/>
    <property type="project" value="InterPro"/>
</dbReference>
<dbReference type="GO" id="GO:0000105">
    <property type="term" value="P:L-histidine biosynthetic process"/>
    <property type="evidence" value="ECO:0007669"/>
    <property type="project" value="UniProtKB-UniRule"/>
</dbReference>
<dbReference type="GO" id="GO:0000162">
    <property type="term" value="P:L-tryptophan biosynthetic process"/>
    <property type="evidence" value="ECO:0007669"/>
    <property type="project" value="InterPro"/>
</dbReference>
<dbReference type="CDD" id="cd04732">
    <property type="entry name" value="HisA"/>
    <property type="match status" value="1"/>
</dbReference>
<dbReference type="FunFam" id="3.20.20.70:FF:000009">
    <property type="entry name" value="1-(5-phosphoribosyl)-5-[(5-phosphoribosylamino)methylideneamino] imidazole-4-carboxamide isomerase"/>
    <property type="match status" value="1"/>
</dbReference>
<dbReference type="Gene3D" id="3.20.20.70">
    <property type="entry name" value="Aldolase class I"/>
    <property type="match status" value="1"/>
</dbReference>
<dbReference type="HAMAP" id="MF_01014">
    <property type="entry name" value="HisA"/>
    <property type="match status" value="1"/>
</dbReference>
<dbReference type="InterPro" id="IPR013785">
    <property type="entry name" value="Aldolase_TIM"/>
</dbReference>
<dbReference type="InterPro" id="IPR006062">
    <property type="entry name" value="His_biosynth"/>
</dbReference>
<dbReference type="InterPro" id="IPR010188">
    <property type="entry name" value="HisA/PriA_Actinobacteria"/>
</dbReference>
<dbReference type="InterPro" id="IPR044524">
    <property type="entry name" value="Isoase_HisA-like"/>
</dbReference>
<dbReference type="InterPro" id="IPR023016">
    <property type="entry name" value="Isoase_HisA-like_bact"/>
</dbReference>
<dbReference type="InterPro" id="IPR011060">
    <property type="entry name" value="RibuloseP-bd_barrel"/>
</dbReference>
<dbReference type="NCBIfam" id="TIGR01919">
    <property type="entry name" value="hisA-trpF"/>
    <property type="match status" value="1"/>
</dbReference>
<dbReference type="PANTHER" id="PTHR43090">
    <property type="entry name" value="1-(5-PHOSPHORIBOSYL)-5-[(5-PHOSPHORIBOSYLAMINO)METHYLIDENEAMINO] IMIDAZOLE-4-CARBOXAMIDE ISOMERASE"/>
    <property type="match status" value="1"/>
</dbReference>
<dbReference type="PANTHER" id="PTHR43090:SF2">
    <property type="entry name" value="1-(5-PHOSPHORIBOSYL)-5-[(5-PHOSPHORIBOSYLAMINO)METHYLIDENEAMINO] IMIDAZOLE-4-CARBOXAMIDE ISOMERASE"/>
    <property type="match status" value="1"/>
</dbReference>
<dbReference type="Pfam" id="PF00977">
    <property type="entry name" value="His_biosynth"/>
    <property type="match status" value="1"/>
</dbReference>
<dbReference type="SUPFAM" id="SSF51366">
    <property type="entry name" value="Ribulose-phoshate binding barrel"/>
    <property type="match status" value="1"/>
</dbReference>
<evidence type="ECO:0000255" key="1">
    <source>
        <dbReference type="HAMAP-Rule" id="MF_01014"/>
    </source>
</evidence>